<comment type="function">
    <text evidence="1">Inner envelope protein involved, through its interaction with host dynein, in the intracellular microtubule-dependent transport of viral capsid toward viral factories (By similarity). Seems to induce caspase-3 activation and apoptosis (By similarity). Plays a role in virion morphogenesis by recruiting and transforming the host ER membranes into the precursors of the viral envelope (By similarity). Involved in virus attachment to the host cell (By similarity).</text>
</comment>
<comment type="subunit">
    <text evidence="1">Interacts with the host light chain cytoplasmic dynein DYNLL1; this interaction is critical for intracellular microtubule-dependent virus transport toward viral factories.</text>
</comment>
<comment type="subcellular location">
    <subcellularLocation>
        <location evidence="1">Virion membrane</location>
        <topology evidence="1">Single-pass membrane protein</topology>
    </subcellularLocation>
    <subcellularLocation>
        <location evidence="1">Host cytoplasm</location>
        <location evidence="1">Host cytoskeleton</location>
    </subcellularLocation>
    <subcellularLocation>
        <location evidence="1">Host endoplasmic reticulum membrane</location>
    </subcellularLocation>
    <text evidence="1">Detected mainly on membrane-like structures within viral factories. Present in mature extracellular virions. Host DYNLL1 and viral p54 interact at the microtubular organizing center (By similarity). Found in the inner envelope of the virus (By similarity).</text>
</comment>
<comment type="induction">
    <text evidence="4">Expressed in the late phase of the viral replicative cycle.</text>
</comment>
<comment type="similarity">
    <text evidence="4">Belongs to the asfivirus envelope protein p54 family.</text>
</comment>
<proteinExistence type="inferred from homology"/>
<accession>Q89784</accession>
<feature type="chain" id="PRO_0000373418" description="Inner membrane protein p54">
    <location>
        <begin position="1"/>
        <end position="176"/>
    </location>
</feature>
<feature type="transmembrane region" description="Helical" evidence="2">
    <location>
        <begin position="32"/>
        <end position="52"/>
    </location>
</feature>
<feature type="region of interest" description="Disordered" evidence="3">
    <location>
        <begin position="82"/>
        <end position="176"/>
    </location>
</feature>
<feature type="region of interest" description="Interaction with host DYNLL1" evidence="1">
    <location>
        <begin position="142"/>
        <end position="154"/>
    </location>
</feature>
<feature type="compositionally biased region" description="Low complexity" evidence="3">
    <location>
        <begin position="123"/>
        <end position="154"/>
    </location>
</feature>
<protein>
    <recommendedName>
        <fullName evidence="1">Inner membrane protein p54</fullName>
    </recommendedName>
    <alternativeName>
        <fullName evidence="1">pE183L</fullName>
    </alternativeName>
</protein>
<name>P54_ASFM2</name>
<reference key="1">
    <citation type="journal article" date="1993" name="J. Gen. Virol.">
        <title>Duplicated genes within the variable right end of the genome of a pathogenic isolate of African swine fever virus.</title>
        <authorList>
            <person name="Vydelingum S."/>
            <person name="Baylis S.A."/>
            <person name="Bristow C."/>
            <person name="Smith G.L."/>
            <person name="Dixon L.K."/>
        </authorList>
    </citation>
    <scope>NUCLEOTIDE SEQUENCE [GENOMIC DNA]</scope>
</reference>
<reference key="2">
    <citation type="journal article" date="1994" name="J. Gen. Virol.">
        <title>Nucleotide sequence of a 55 kbp region from the right end of the genome of a pathogenic African swine fever virus isolate (Malawi LIL20/1).</title>
        <authorList>
            <person name="Dixon L.K."/>
            <person name="Twigg S.R.F."/>
            <person name="Baylis S.A."/>
            <person name="Vydelingum S."/>
            <person name="Bristow C."/>
            <person name="Hammond J.M."/>
            <person name="Smith G.L."/>
        </authorList>
    </citation>
    <scope>NUCLEOTIDE SEQUENCE [GENOMIC DNA]</scope>
</reference>
<reference key="3">
    <citation type="journal article" date="1995" name="J. Gen. Virol.">
        <title>African swine fever virus gene j13L encodes a 25-27KDa protein with variable numbers of amino acid repeats which is present in extracellular virions.</title>
        <authorList>
            <person name="Sun H."/>
            <person name="Jacobs S.C."/>
            <person name="Smith G.L."/>
            <person name="Dixon L.K."/>
            <person name="Parkhouse R.M.E."/>
        </authorList>
    </citation>
    <scope>NUCLEOTIDE SEQUENCE [GENOMIC DNA]</scope>
    <scope>SUBCELLULAR LOCATION</scope>
    <source>
        <strain>isolate Malawi Bongera 83</strain>
    </source>
</reference>
<reference key="4">
    <citation type="submission" date="2008-07" db="EMBL/GenBank/DDBJ databases">
        <title>Genotypic analysis of African swine fever virus.</title>
        <authorList>
            <person name="Heath L.E."/>
            <person name="Vosloo W."/>
        </authorList>
    </citation>
    <scope>NUCLEOTIDE SEQUENCE [GENOMIC DNA]</scope>
    <source>
        <strain>Isolate BAN/91/1</strain>
        <strain>Isolate DED/89/1</strain>
        <strain>Isolate DOWA</strain>
        <strain>Isolate MCH/89/1</strain>
        <strain>Isolate Moz/98/1</strain>
    </source>
</reference>
<reference key="5">
    <citation type="journal article" date="2009" name="Virus Genes">
        <title>Enhanced discrimination of African swine fever virus isolates through nucleotide sequencing of the p54, p72, and pB602L (CVR) genes.</title>
        <authorList>
            <person name="Gallardo C."/>
            <person name="Mwaengo D.M."/>
            <person name="Macharia J.M."/>
            <person name="Arias M."/>
            <person name="Taracha E.A."/>
            <person name="Soler A."/>
            <person name="Okoth E."/>
            <person name="Martin E."/>
            <person name="Kasiti J."/>
            <person name="Bishop R.P."/>
        </authorList>
    </citation>
    <scope>NUCLEOTIDE SEQUENCE [GENOMIC DNA]</scope>
</reference>
<reference key="6">
    <citation type="submission" date="2003-03" db="EMBL/GenBank/DDBJ databases">
        <title>African swine fever virus genomes.</title>
        <authorList>
            <person name="Kutish G.F."/>
            <person name="Rock D.L."/>
        </authorList>
    </citation>
    <scope>NUCLEOTIDE SEQUENCE [LARGE SCALE GENOMIC DNA]</scope>
</reference>
<reference key="7">
    <citation type="journal article" date="1998" name="J. Gen. Virol.">
        <title>Characterization of African swine fever virion proteins j5R and j13L: immuno-localization in virus particles and assembly sites.</title>
        <authorList>
            <person name="Brookes S.M."/>
            <person name="Sun H."/>
            <person name="Dixon L.K."/>
            <person name="Parkhouse R.M.E."/>
        </authorList>
    </citation>
    <scope>SUBCELLULAR LOCATION</scope>
</reference>
<organism>
    <name type="scientific">African swine fever virus (isolate Tick/Malawi/Lil 20-1/1983)</name>
    <name type="common">ASFV</name>
    <dbReference type="NCBI Taxonomy" id="10500"/>
    <lineage>
        <taxon>Viruses</taxon>
        <taxon>Varidnaviria</taxon>
        <taxon>Bamfordvirae</taxon>
        <taxon>Nucleocytoviricota</taxon>
        <taxon>Pokkesviricetes</taxon>
        <taxon>Asfuvirales</taxon>
        <taxon>Asfarviridae</taxon>
        <taxon>Asfivirus</taxon>
        <taxon>African swine fever virus</taxon>
    </lineage>
</organism>
<evidence type="ECO:0000250" key="1">
    <source>
        <dbReference type="UniProtKB" id="Q65194"/>
    </source>
</evidence>
<evidence type="ECO:0000255" key="2"/>
<evidence type="ECO:0000256" key="3">
    <source>
        <dbReference type="SAM" id="MobiDB-lite"/>
    </source>
</evidence>
<evidence type="ECO:0000305" key="4"/>
<organismHost>
    <name type="scientific">Ornithodoros</name>
    <name type="common">relapsing fever ticks</name>
    <dbReference type="NCBI Taxonomy" id="6937"/>
</organismHost>
<organismHost>
    <name type="scientific">Phacochoerus aethiopicus</name>
    <name type="common">Warthog</name>
    <dbReference type="NCBI Taxonomy" id="85517"/>
</organismHost>
<organismHost>
    <name type="scientific">Phacochoerus africanus</name>
    <name type="common">Warthog</name>
    <dbReference type="NCBI Taxonomy" id="41426"/>
</organismHost>
<organismHost>
    <name type="scientific">Potamochoerus larvatus</name>
    <name type="common">Bushpig</name>
    <dbReference type="NCBI Taxonomy" id="273792"/>
</organismHost>
<organismHost>
    <name type="scientific">Sus scrofa</name>
    <name type="common">Pig</name>
    <dbReference type="NCBI Taxonomy" id="9823"/>
</organismHost>
<keyword id="KW-0053">Apoptosis</keyword>
<keyword id="KW-1176">Cytoplasmic inwards viral transport</keyword>
<keyword id="KW-1035">Host cytoplasm</keyword>
<keyword id="KW-1037">Host cytoskeleton</keyword>
<keyword id="KW-1038">Host endoplasmic reticulum</keyword>
<keyword id="KW-1043">Host membrane</keyword>
<keyword id="KW-0945">Host-virus interaction</keyword>
<keyword id="KW-0472">Membrane</keyword>
<keyword id="KW-1177">Microtubular inwards viral transport</keyword>
<keyword id="KW-0812">Transmembrane</keyword>
<keyword id="KW-1133">Transmembrane helix</keyword>
<keyword id="KW-0261">Viral envelope protein</keyword>
<keyword id="KW-0946">Virion</keyword>
<keyword id="KW-1160">Virus entry into host cell</keyword>
<dbReference type="EMBL" id="X71982">
    <property type="protein sequence ID" value="CAA50833.1"/>
    <property type="molecule type" value="Genomic_DNA"/>
</dbReference>
<dbReference type="EMBL" id="X84905">
    <property type="protein sequence ID" value="CAA59329.1"/>
    <property type="molecule type" value="Genomic_DNA"/>
</dbReference>
<dbReference type="EMBL" id="FJ174425">
    <property type="protein sequence ID" value="ACJ39044.1"/>
    <property type="molecule type" value="Genomic_DNA"/>
</dbReference>
<dbReference type="EMBL" id="EU874348">
    <property type="protein sequence ID" value="ACJ61607.1"/>
    <property type="molecule type" value="Genomic_DNA"/>
</dbReference>
<dbReference type="EMBL" id="EU874349">
    <property type="protein sequence ID" value="ACJ61608.1"/>
    <property type="molecule type" value="Genomic_DNA"/>
</dbReference>
<dbReference type="EMBL" id="EU874350">
    <property type="protein sequence ID" value="ACJ61609.1"/>
    <property type="molecule type" value="Genomic_DNA"/>
</dbReference>
<dbReference type="EMBL" id="EU874352">
    <property type="protein sequence ID" value="ACJ61611.1"/>
    <property type="molecule type" value="Genomic_DNA"/>
</dbReference>
<dbReference type="EMBL" id="EU874385">
    <property type="protein sequence ID" value="ACJ61644.1"/>
    <property type="molecule type" value="Genomic_DNA"/>
</dbReference>
<dbReference type="EMBL" id="AY261361">
    <property type="status" value="NOT_ANNOTATED_CDS"/>
    <property type="molecule type" value="Genomic_DNA"/>
</dbReference>
<dbReference type="PIR" id="S52914">
    <property type="entry name" value="S52914"/>
</dbReference>
<dbReference type="SMR" id="Q89784"/>
<dbReference type="Proteomes" id="UP000000860">
    <property type="component" value="Segment"/>
</dbReference>
<dbReference type="GO" id="GO:0043657">
    <property type="term" value="C:host cell"/>
    <property type="evidence" value="ECO:0007669"/>
    <property type="project" value="GOC"/>
</dbReference>
<dbReference type="GO" id="GO:0044167">
    <property type="term" value="C:host cell endoplasmic reticulum membrane"/>
    <property type="evidence" value="ECO:0007669"/>
    <property type="project" value="UniProtKB-SubCell"/>
</dbReference>
<dbReference type="GO" id="GO:0044163">
    <property type="term" value="C:host cytoskeleton"/>
    <property type="evidence" value="ECO:0007669"/>
    <property type="project" value="UniProtKB-SubCell"/>
</dbReference>
<dbReference type="GO" id="GO:0016020">
    <property type="term" value="C:membrane"/>
    <property type="evidence" value="ECO:0007669"/>
    <property type="project" value="UniProtKB-KW"/>
</dbReference>
<dbReference type="GO" id="GO:0019031">
    <property type="term" value="C:viral envelope"/>
    <property type="evidence" value="ECO:0007669"/>
    <property type="project" value="UniProtKB-KW"/>
</dbReference>
<dbReference type="GO" id="GO:0055036">
    <property type="term" value="C:virion membrane"/>
    <property type="evidence" value="ECO:0007669"/>
    <property type="project" value="UniProtKB-SubCell"/>
</dbReference>
<dbReference type="GO" id="GO:0075521">
    <property type="term" value="P:microtubule-dependent intracellular transport of viral material towards nucleus"/>
    <property type="evidence" value="ECO:0007669"/>
    <property type="project" value="UniProtKB-KW"/>
</dbReference>
<dbReference type="GO" id="GO:0046718">
    <property type="term" value="P:symbiont entry into host cell"/>
    <property type="evidence" value="ECO:0007669"/>
    <property type="project" value="UniProtKB-KW"/>
</dbReference>
<dbReference type="InterPro" id="IPR008385">
    <property type="entry name" value="ASFV_p54"/>
</dbReference>
<dbReference type="Pfam" id="PF05568">
    <property type="entry name" value="ASFV_J13L"/>
    <property type="match status" value="1"/>
</dbReference>
<sequence length="176" mass="19021">MDSEFFQPVYPRHYGECLSSTPAPSFFSTHMYTILIAIVVLIIIIIVLIYLFSSRKKKAAAAIEEEDIQFINPYQDQQWAGVTPQPGIAKPAGASTGSAGKPVMGRPVTNKPVTNKPVTDRLGMAAGGPAAASAPAHPAELYTTATTQNTASQTMPADENLRQRNTYTHKDLENSL</sequence>
<gene>
    <name type="ordered locus">Mal-134</name>
    <name type="ORF">j13L</name>
</gene>